<keyword id="KW-0256">Endoplasmic reticulum</keyword>
<keyword id="KW-0931">ER-Golgi transport</keyword>
<keyword id="KW-0333">Golgi apparatus</keyword>
<keyword id="KW-0342">GTP-binding</keyword>
<keyword id="KW-0449">Lipoprotein</keyword>
<keyword id="KW-0547">Nucleotide-binding</keyword>
<keyword id="KW-0636">Prenylation</keyword>
<keyword id="KW-0653">Protein transport</keyword>
<keyword id="KW-0813">Transport</keyword>
<comment type="function">
    <text evidence="1">Probably required for transit of protein from the ER through Golgi compartment.</text>
</comment>
<comment type="subcellular location">
    <subcellularLocation>
        <location evidence="2">Golgi apparatus</location>
    </subcellularLocation>
    <subcellularLocation>
        <location evidence="2">Endoplasmic reticulum</location>
    </subcellularLocation>
</comment>
<comment type="similarity">
    <text evidence="4">Belongs to the small GTPase superfamily. Rab family.</text>
</comment>
<accession>Q05974</accession>
<protein>
    <recommendedName>
        <fullName>Ras-related protein Rab-1A</fullName>
    </recommendedName>
</protein>
<feature type="chain" id="PRO_0000121060" description="Ras-related protein Rab-1A">
    <location>
        <begin position="1"/>
        <end position="205"/>
    </location>
</feature>
<feature type="region of interest" description="Disordered" evidence="3">
    <location>
        <begin position="183"/>
        <end position="205"/>
    </location>
</feature>
<feature type="short sequence motif" description="Effector region" evidence="1">
    <location>
        <begin position="40"/>
        <end position="48"/>
    </location>
</feature>
<feature type="compositionally biased region" description="Polar residues" evidence="3">
    <location>
        <begin position="183"/>
        <end position="198"/>
    </location>
</feature>
<feature type="binding site" evidence="2">
    <location>
        <begin position="18"/>
        <end position="26"/>
    </location>
    <ligand>
        <name>GTP</name>
        <dbReference type="ChEBI" id="CHEBI:37565"/>
    </ligand>
</feature>
<feature type="binding site" evidence="2">
    <location>
        <begin position="36"/>
        <end position="43"/>
    </location>
    <ligand>
        <name>GTP</name>
        <dbReference type="ChEBI" id="CHEBI:37565"/>
    </ligand>
</feature>
<feature type="binding site" evidence="2">
    <location>
        <begin position="66"/>
        <end position="70"/>
    </location>
    <ligand>
        <name>GTP</name>
        <dbReference type="ChEBI" id="CHEBI:37565"/>
    </ligand>
</feature>
<feature type="binding site" evidence="2">
    <location>
        <begin position="124"/>
        <end position="127"/>
    </location>
    <ligand>
        <name>GTP</name>
        <dbReference type="ChEBI" id="CHEBI:37565"/>
    </ligand>
</feature>
<feature type="binding site" evidence="2">
    <location>
        <begin position="154"/>
        <end position="156"/>
    </location>
    <ligand>
        <name>GTP</name>
        <dbReference type="ChEBI" id="CHEBI:37565"/>
    </ligand>
</feature>
<feature type="lipid moiety-binding region" description="S-geranylgeranyl cysteine" evidence="1">
    <location>
        <position position="204"/>
    </location>
</feature>
<feature type="lipid moiety-binding region" description="S-geranylgeranyl cysteine" evidence="1">
    <location>
        <position position="205"/>
    </location>
</feature>
<dbReference type="EMBL" id="X72688">
    <property type="protein sequence ID" value="CAA51233.1"/>
    <property type="molecule type" value="mRNA"/>
</dbReference>
<dbReference type="PIR" id="S38339">
    <property type="entry name" value="S38339"/>
</dbReference>
<dbReference type="SMR" id="Q05974"/>
<dbReference type="GO" id="GO:0005783">
    <property type="term" value="C:endoplasmic reticulum"/>
    <property type="evidence" value="ECO:0007669"/>
    <property type="project" value="UniProtKB-SubCell"/>
</dbReference>
<dbReference type="GO" id="GO:0005794">
    <property type="term" value="C:Golgi apparatus"/>
    <property type="evidence" value="ECO:0007669"/>
    <property type="project" value="UniProtKB-SubCell"/>
</dbReference>
<dbReference type="GO" id="GO:0005525">
    <property type="term" value="F:GTP binding"/>
    <property type="evidence" value="ECO:0007669"/>
    <property type="project" value="UniProtKB-KW"/>
</dbReference>
<dbReference type="GO" id="GO:0003924">
    <property type="term" value="F:GTPase activity"/>
    <property type="evidence" value="ECO:0007669"/>
    <property type="project" value="InterPro"/>
</dbReference>
<dbReference type="GO" id="GO:0015031">
    <property type="term" value="P:protein transport"/>
    <property type="evidence" value="ECO:0007669"/>
    <property type="project" value="UniProtKB-KW"/>
</dbReference>
<dbReference type="GO" id="GO:0016192">
    <property type="term" value="P:vesicle-mediated transport"/>
    <property type="evidence" value="ECO:0007669"/>
    <property type="project" value="UniProtKB-KW"/>
</dbReference>
<dbReference type="CDD" id="cd01869">
    <property type="entry name" value="Rab1_Ypt1"/>
    <property type="match status" value="1"/>
</dbReference>
<dbReference type="FunFam" id="3.40.50.300:FF:000069">
    <property type="entry name" value="Ras GTP-binding protein YPT1"/>
    <property type="match status" value="1"/>
</dbReference>
<dbReference type="Gene3D" id="3.40.50.300">
    <property type="entry name" value="P-loop containing nucleotide triphosphate hydrolases"/>
    <property type="match status" value="1"/>
</dbReference>
<dbReference type="InterPro" id="IPR027417">
    <property type="entry name" value="P-loop_NTPase"/>
</dbReference>
<dbReference type="InterPro" id="IPR050227">
    <property type="entry name" value="Rab"/>
</dbReference>
<dbReference type="InterPro" id="IPR005225">
    <property type="entry name" value="Small_GTP-bd"/>
</dbReference>
<dbReference type="InterPro" id="IPR001806">
    <property type="entry name" value="Small_GTPase"/>
</dbReference>
<dbReference type="NCBIfam" id="TIGR00231">
    <property type="entry name" value="small_GTP"/>
    <property type="match status" value="1"/>
</dbReference>
<dbReference type="PANTHER" id="PTHR47977">
    <property type="entry name" value="RAS-RELATED PROTEIN RAB"/>
    <property type="match status" value="1"/>
</dbReference>
<dbReference type="Pfam" id="PF00071">
    <property type="entry name" value="Ras"/>
    <property type="match status" value="1"/>
</dbReference>
<dbReference type="PRINTS" id="PR00449">
    <property type="entry name" value="RASTRNSFRMNG"/>
</dbReference>
<dbReference type="SMART" id="SM00177">
    <property type="entry name" value="ARF"/>
    <property type="match status" value="1"/>
</dbReference>
<dbReference type="SMART" id="SM00175">
    <property type="entry name" value="RAB"/>
    <property type="match status" value="1"/>
</dbReference>
<dbReference type="SMART" id="SM00176">
    <property type="entry name" value="RAN"/>
    <property type="match status" value="1"/>
</dbReference>
<dbReference type="SMART" id="SM00173">
    <property type="entry name" value="RAS"/>
    <property type="match status" value="1"/>
</dbReference>
<dbReference type="SMART" id="SM00174">
    <property type="entry name" value="RHO"/>
    <property type="match status" value="1"/>
</dbReference>
<dbReference type="SUPFAM" id="SSF52540">
    <property type="entry name" value="P-loop containing nucleoside triphosphate hydrolases"/>
    <property type="match status" value="1"/>
</dbReference>
<dbReference type="PROSITE" id="PS51419">
    <property type="entry name" value="RAB"/>
    <property type="match status" value="1"/>
</dbReference>
<name>RAB1A_LYMST</name>
<organism>
    <name type="scientific">Lymnaea stagnalis</name>
    <name type="common">Great pond snail</name>
    <name type="synonym">Helix stagnalis</name>
    <dbReference type="NCBI Taxonomy" id="6523"/>
    <lineage>
        <taxon>Eukaryota</taxon>
        <taxon>Metazoa</taxon>
        <taxon>Spiralia</taxon>
        <taxon>Lophotrochozoa</taxon>
        <taxon>Mollusca</taxon>
        <taxon>Gastropoda</taxon>
        <taxon>Heterobranchia</taxon>
        <taxon>Euthyneura</taxon>
        <taxon>Panpulmonata</taxon>
        <taxon>Hygrophila</taxon>
        <taxon>Lymnaeoidea</taxon>
        <taxon>Lymnaeidae</taxon>
        <taxon>Lymnaea</taxon>
    </lineage>
</organism>
<gene>
    <name type="primary">RAB1A</name>
</gene>
<sequence length="205" mass="22760">MSTMNPDYDYLFKLLLIGDSGVGKSCLLLRFADDTYTESYISTIGVDFKIRTIELDGKTIKLQIWDTAGQERFRTITSSYYRGAHGIIVVYDVTDQESFNNVKQWLQEIDRYASENVNKLLVGNKSDLTTKKVVDFTTAKEYADQLGIPFLETSAKNATNVEQAFMTMAAEIKNRMGPITAASDSKPSVKINSSTPVSANKGGCC</sequence>
<proteinExistence type="evidence at transcript level"/>
<evidence type="ECO:0000250" key="1"/>
<evidence type="ECO:0000250" key="2">
    <source>
        <dbReference type="UniProtKB" id="P62820"/>
    </source>
</evidence>
<evidence type="ECO:0000256" key="3">
    <source>
        <dbReference type="SAM" id="MobiDB-lite"/>
    </source>
</evidence>
<evidence type="ECO:0000305" key="4"/>
<reference key="1">
    <citation type="journal article" date="1993" name="Eur. J. Biochem.">
        <title>Isolation and characterization of three cDNAs coding for Rab proteins from the albumen gland of the mollusc Lymnaea stagnalis.</title>
        <authorList>
            <person name="Agterberg M."/>
            <person name="van Die I."/>
            <person name="Yang H."/>
            <person name="Andriessen J.A."/>
            <person name="van Tetering A."/>
            <person name="van den Eijnden D.H."/>
            <person name="Ploegh H.L."/>
        </authorList>
    </citation>
    <scope>NUCLEOTIDE SEQUENCE [MRNA]</scope>
</reference>